<accession>A4QSS5</accession>
<accession>G4N5P9</accession>
<evidence type="ECO:0000250" key="1"/>
<evidence type="ECO:0000255" key="2">
    <source>
        <dbReference type="PROSITE-ProRule" id="PRU00541"/>
    </source>
</evidence>
<evidence type="ECO:0000255" key="3">
    <source>
        <dbReference type="PROSITE-ProRule" id="PRU00542"/>
    </source>
</evidence>
<evidence type="ECO:0000256" key="4">
    <source>
        <dbReference type="SAM" id="MobiDB-lite"/>
    </source>
</evidence>
<evidence type="ECO:0000305" key="5"/>
<feature type="chain" id="PRO_0000294615" description="ATP-dependent RNA helicase DBP2">
    <location>
        <begin position="1"/>
        <end position="548"/>
    </location>
</feature>
<feature type="domain" description="Helicase ATP-binding" evidence="2">
    <location>
        <begin position="156"/>
        <end position="331"/>
    </location>
</feature>
<feature type="domain" description="Helicase C-terminal" evidence="3">
    <location>
        <begin position="343"/>
        <end position="508"/>
    </location>
</feature>
<feature type="region of interest" description="Disordered" evidence="4">
    <location>
        <begin position="515"/>
        <end position="548"/>
    </location>
</feature>
<feature type="short sequence motif" description="Q motif">
    <location>
        <begin position="125"/>
        <end position="153"/>
    </location>
</feature>
<feature type="short sequence motif" description="DEAD box">
    <location>
        <begin position="279"/>
        <end position="282"/>
    </location>
</feature>
<feature type="compositionally biased region" description="Gly residues" evidence="4">
    <location>
        <begin position="515"/>
        <end position="524"/>
    </location>
</feature>
<feature type="binding site" evidence="2">
    <location>
        <begin position="169"/>
        <end position="176"/>
    </location>
    <ligand>
        <name>ATP</name>
        <dbReference type="ChEBI" id="CHEBI:30616"/>
    </ligand>
</feature>
<name>DBP2_PYRO7</name>
<organism>
    <name type="scientific">Pyricularia oryzae (strain 70-15 / ATCC MYA-4617 / FGSC 8958)</name>
    <name type="common">Rice blast fungus</name>
    <name type="synonym">Magnaporthe oryzae</name>
    <dbReference type="NCBI Taxonomy" id="242507"/>
    <lineage>
        <taxon>Eukaryota</taxon>
        <taxon>Fungi</taxon>
        <taxon>Dikarya</taxon>
        <taxon>Ascomycota</taxon>
        <taxon>Pezizomycotina</taxon>
        <taxon>Sordariomycetes</taxon>
        <taxon>Sordariomycetidae</taxon>
        <taxon>Magnaporthales</taxon>
        <taxon>Pyriculariaceae</taxon>
        <taxon>Pyricularia</taxon>
    </lineage>
</organism>
<reference key="1">
    <citation type="journal article" date="2005" name="Nature">
        <title>The genome sequence of the rice blast fungus Magnaporthe grisea.</title>
        <authorList>
            <person name="Dean R.A."/>
            <person name="Talbot N.J."/>
            <person name="Ebbole D.J."/>
            <person name="Farman M.L."/>
            <person name="Mitchell T.K."/>
            <person name="Orbach M.J."/>
            <person name="Thon M.R."/>
            <person name="Kulkarni R."/>
            <person name="Xu J.-R."/>
            <person name="Pan H."/>
            <person name="Read N.D."/>
            <person name="Lee Y.-H."/>
            <person name="Carbone I."/>
            <person name="Brown D."/>
            <person name="Oh Y.Y."/>
            <person name="Donofrio N."/>
            <person name="Jeong J.S."/>
            <person name="Soanes D.M."/>
            <person name="Djonovic S."/>
            <person name="Kolomiets E."/>
            <person name="Rehmeyer C."/>
            <person name="Li W."/>
            <person name="Harding M."/>
            <person name="Kim S."/>
            <person name="Lebrun M.-H."/>
            <person name="Bohnert H."/>
            <person name="Coughlan S."/>
            <person name="Butler J."/>
            <person name="Calvo S.E."/>
            <person name="Ma L.-J."/>
            <person name="Nicol R."/>
            <person name="Purcell S."/>
            <person name="Nusbaum C."/>
            <person name="Galagan J.E."/>
            <person name="Birren B.W."/>
        </authorList>
    </citation>
    <scope>NUCLEOTIDE SEQUENCE [LARGE SCALE GENOMIC DNA]</scope>
    <source>
        <strain>70-15 / ATCC MYA-4617 / FGSC 8958</strain>
    </source>
</reference>
<proteinExistence type="inferred from homology"/>
<gene>
    <name type="primary">DBP2</name>
    <name type="ORF">MGG_12894</name>
</gene>
<comment type="function">
    <text evidence="1">ATP-dependent RNA helicase involved nonsense-mediated mRNA decay and ribosome biogenesis through rRNA processing.</text>
</comment>
<comment type="catalytic activity">
    <reaction>
        <text>ATP + H2O = ADP + phosphate + H(+)</text>
        <dbReference type="Rhea" id="RHEA:13065"/>
        <dbReference type="ChEBI" id="CHEBI:15377"/>
        <dbReference type="ChEBI" id="CHEBI:15378"/>
        <dbReference type="ChEBI" id="CHEBI:30616"/>
        <dbReference type="ChEBI" id="CHEBI:43474"/>
        <dbReference type="ChEBI" id="CHEBI:456216"/>
        <dbReference type="EC" id="3.6.4.13"/>
    </reaction>
</comment>
<comment type="subunit">
    <text evidence="1">Associates with polysomes.</text>
</comment>
<comment type="subcellular location">
    <subcellularLocation>
        <location evidence="1">Cytoplasm</location>
    </subcellularLocation>
    <subcellularLocation>
        <location evidence="1">Nucleus</location>
    </subcellularLocation>
</comment>
<comment type="domain">
    <text>The Q motif is unique to and characteristic of the DEAD box family of RNA helicases and controls ATP binding and hydrolysis.</text>
</comment>
<comment type="similarity">
    <text evidence="5">Belongs to the DEAD box helicase family. DDX5/DBP2 subfamily.</text>
</comment>
<sequence>MSYGGGGYGGRNGGGYGGGRDGGYSNGHGSHGGGYGGGGGGGYGGGGGGYGGGGGGGFGGGGDRMSNLGAGLQKQDWDINALPKFEKHFYKEHPDVTNRSQAEVDKFRREHSMAVQGSDVPKPVETFDEAGFPRYVMDEVKAQGFPAPTAIQSQGWPMALSGRDVVGIAETGSGKTLTYCLPAIVHINAQPLLAPGDGPIVLILAPTRELAVQIQAEISKFGKSSRIRNTCVYGGVPKGPQIRDLSRGVEVCIATPGRLIDMLESGKTNLRRVTYLVLDEADRMLDMGFEPQIRKIIGQIRPDRQTLMWSATWPKEVRNMAADFLQDFIQVNIGSLDLSANHRITQIVEVVSESEKRDRMIRHMEKVMDGKDSKNKILIFVGTKRVADEITRFLRQDGWPALSIHGDKQQNERDWVLDQFKTGKSPIMVATDVASRGIDVRNITHVLNYDYPNNSEDYIHRIGRTGRAGAKGTAITFFTTENSKQARDLLGVLQEAKQEIDPRLAEMARYGGGGGGGRYGGYRGRGGRHHGGGGRGANDLPMGGNRRW</sequence>
<dbReference type="EC" id="3.6.4.13"/>
<dbReference type="EMBL" id="CM001233">
    <property type="protein sequence ID" value="EHA53039.1"/>
    <property type="molecule type" value="Genomic_DNA"/>
</dbReference>
<dbReference type="RefSeq" id="XP_003712846.1">
    <property type="nucleotide sequence ID" value="XM_003712798.1"/>
</dbReference>
<dbReference type="SMR" id="A4QSS5"/>
<dbReference type="FunCoup" id="A4QSS5">
    <property type="interactions" value="1152"/>
</dbReference>
<dbReference type="STRING" id="242507.A4QSS5"/>
<dbReference type="EnsemblFungi" id="MGG_16901T0">
    <property type="protein sequence ID" value="MGG_16901T0"/>
    <property type="gene ID" value="MGG_16901"/>
</dbReference>
<dbReference type="KEGG" id="mgr:MGG_16901"/>
<dbReference type="VEuPathDB" id="FungiDB:MGG_16901"/>
<dbReference type="eggNOG" id="KOG0331">
    <property type="taxonomic scope" value="Eukaryota"/>
</dbReference>
<dbReference type="HOGENOM" id="CLU_003041_16_9_1"/>
<dbReference type="InParanoid" id="A4QSS5"/>
<dbReference type="OMA" id="STMPKFE"/>
<dbReference type="OrthoDB" id="196131at2759"/>
<dbReference type="Proteomes" id="UP000009058">
    <property type="component" value="Chromosome 3"/>
</dbReference>
<dbReference type="GO" id="GO:0005737">
    <property type="term" value="C:cytoplasm"/>
    <property type="evidence" value="ECO:0007669"/>
    <property type="project" value="UniProtKB-SubCell"/>
</dbReference>
<dbReference type="GO" id="GO:0005634">
    <property type="term" value="C:nucleus"/>
    <property type="evidence" value="ECO:0007669"/>
    <property type="project" value="UniProtKB-SubCell"/>
</dbReference>
<dbReference type="GO" id="GO:0005524">
    <property type="term" value="F:ATP binding"/>
    <property type="evidence" value="ECO:0007669"/>
    <property type="project" value="UniProtKB-KW"/>
</dbReference>
<dbReference type="GO" id="GO:0016887">
    <property type="term" value="F:ATP hydrolysis activity"/>
    <property type="evidence" value="ECO:0007669"/>
    <property type="project" value="RHEA"/>
</dbReference>
<dbReference type="GO" id="GO:0003723">
    <property type="term" value="F:RNA binding"/>
    <property type="evidence" value="ECO:0007669"/>
    <property type="project" value="UniProtKB-KW"/>
</dbReference>
<dbReference type="GO" id="GO:0003724">
    <property type="term" value="F:RNA helicase activity"/>
    <property type="evidence" value="ECO:0007669"/>
    <property type="project" value="UniProtKB-EC"/>
</dbReference>
<dbReference type="GO" id="GO:0000184">
    <property type="term" value="P:nuclear-transcribed mRNA catabolic process, nonsense-mediated decay"/>
    <property type="evidence" value="ECO:0007669"/>
    <property type="project" value="UniProtKB-KW"/>
</dbReference>
<dbReference type="GO" id="GO:0006364">
    <property type="term" value="P:rRNA processing"/>
    <property type="evidence" value="ECO:0007669"/>
    <property type="project" value="UniProtKB-KW"/>
</dbReference>
<dbReference type="CDD" id="cd17966">
    <property type="entry name" value="DEADc_DDX5_DDX17"/>
    <property type="match status" value="1"/>
</dbReference>
<dbReference type="CDD" id="cd18787">
    <property type="entry name" value="SF2_C_DEAD"/>
    <property type="match status" value="1"/>
</dbReference>
<dbReference type="FunFam" id="3.40.50.300:FF:000008">
    <property type="entry name" value="ATP-dependent RNA helicase RhlB"/>
    <property type="match status" value="1"/>
</dbReference>
<dbReference type="FunFam" id="3.40.50.300:FF:000079">
    <property type="entry name" value="probable ATP-dependent RNA helicase DDX17"/>
    <property type="match status" value="1"/>
</dbReference>
<dbReference type="Gene3D" id="3.40.50.300">
    <property type="entry name" value="P-loop containing nucleotide triphosphate hydrolases"/>
    <property type="match status" value="2"/>
</dbReference>
<dbReference type="InterPro" id="IPR011545">
    <property type="entry name" value="DEAD/DEAH_box_helicase_dom"/>
</dbReference>
<dbReference type="InterPro" id="IPR014001">
    <property type="entry name" value="Helicase_ATP-bd"/>
</dbReference>
<dbReference type="InterPro" id="IPR001650">
    <property type="entry name" value="Helicase_C-like"/>
</dbReference>
<dbReference type="InterPro" id="IPR027417">
    <property type="entry name" value="P-loop_NTPase"/>
</dbReference>
<dbReference type="InterPro" id="IPR000629">
    <property type="entry name" value="RNA-helicase_DEAD-box_CS"/>
</dbReference>
<dbReference type="InterPro" id="IPR014014">
    <property type="entry name" value="RNA_helicase_DEAD_Q_motif"/>
</dbReference>
<dbReference type="PANTHER" id="PTHR47958">
    <property type="entry name" value="ATP-DEPENDENT RNA HELICASE DBP3"/>
    <property type="match status" value="1"/>
</dbReference>
<dbReference type="Pfam" id="PF00270">
    <property type="entry name" value="DEAD"/>
    <property type="match status" value="1"/>
</dbReference>
<dbReference type="Pfam" id="PF00271">
    <property type="entry name" value="Helicase_C"/>
    <property type="match status" value="1"/>
</dbReference>
<dbReference type="SMART" id="SM00487">
    <property type="entry name" value="DEXDc"/>
    <property type="match status" value="1"/>
</dbReference>
<dbReference type="SMART" id="SM00490">
    <property type="entry name" value="HELICc"/>
    <property type="match status" value="1"/>
</dbReference>
<dbReference type="SUPFAM" id="SSF52540">
    <property type="entry name" value="P-loop containing nucleoside triphosphate hydrolases"/>
    <property type="match status" value="1"/>
</dbReference>
<dbReference type="PROSITE" id="PS00039">
    <property type="entry name" value="DEAD_ATP_HELICASE"/>
    <property type="match status" value="1"/>
</dbReference>
<dbReference type="PROSITE" id="PS51192">
    <property type="entry name" value="HELICASE_ATP_BIND_1"/>
    <property type="match status" value="1"/>
</dbReference>
<dbReference type="PROSITE" id="PS51194">
    <property type="entry name" value="HELICASE_CTER"/>
    <property type="match status" value="1"/>
</dbReference>
<dbReference type="PROSITE" id="PS51195">
    <property type="entry name" value="Q_MOTIF"/>
    <property type="match status" value="1"/>
</dbReference>
<keyword id="KW-0067">ATP-binding</keyword>
<keyword id="KW-0963">Cytoplasm</keyword>
<keyword id="KW-0347">Helicase</keyword>
<keyword id="KW-0378">Hydrolase</keyword>
<keyword id="KW-0866">Nonsense-mediated mRNA decay</keyword>
<keyword id="KW-0547">Nucleotide-binding</keyword>
<keyword id="KW-0539">Nucleus</keyword>
<keyword id="KW-1185">Reference proteome</keyword>
<keyword id="KW-0690">Ribosome biogenesis</keyword>
<keyword id="KW-0694">RNA-binding</keyword>
<keyword id="KW-0698">rRNA processing</keyword>
<protein>
    <recommendedName>
        <fullName>ATP-dependent RNA helicase DBP2</fullName>
        <ecNumber>3.6.4.13</ecNumber>
    </recommendedName>
</protein>